<evidence type="ECO:0000250" key="1"/>
<evidence type="ECO:0000250" key="2">
    <source>
        <dbReference type="UniProtKB" id="O43678"/>
    </source>
</evidence>
<evidence type="ECO:0000250" key="3">
    <source>
        <dbReference type="UniProtKB" id="Q9CQ75"/>
    </source>
</evidence>
<evidence type="ECO:0000305" key="4"/>
<dbReference type="EMBL" id="AB169602">
    <property type="protein sequence ID" value="BAE01683.1"/>
    <property type="molecule type" value="mRNA"/>
</dbReference>
<dbReference type="RefSeq" id="NP_001270545.1">
    <property type="nucleotide sequence ID" value="NM_001283616.2"/>
</dbReference>
<dbReference type="SMR" id="Q4R5E2"/>
<dbReference type="STRING" id="9541.ENSMFAP00000001991"/>
<dbReference type="Ensembl" id="ENSMFAT00000092685.1">
    <property type="protein sequence ID" value="ENSMFAP00000046180.1"/>
    <property type="gene ID" value="ENSMFAG00000049634.1"/>
</dbReference>
<dbReference type="GeneID" id="101925194"/>
<dbReference type="KEGG" id="mcf:101925194"/>
<dbReference type="CTD" id="4695"/>
<dbReference type="VEuPathDB" id="HostDB:ENSMFAG00000034109"/>
<dbReference type="eggNOG" id="KOG3446">
    <property type="taxonomic scope" value="Eukaryota"/>
</dbReference>
<dbReference type="GeneTree" id="ENSGT00390000006178"/>
<dbReference type="OMA" id="RIHLCQH"/>
<dbReference type="OrthoDB" id="4644at314294"/>
<dbReference type="Proteomes" id="UP000233100">
    <property type="component" value="Chromosome 6"/>
</dbReference>
<dbReference type="GO" id="GO:0005743">
    <property type="term" value="C:mitochondrial inner membrane"/>
    <property type="evidence" value="ECO:0007669"/>
    <property type="project" value="UniProtKB-SubCell"/>
</dbReference>
<dbReference type="GO" id="GO:0045271">
    <property type="term" value="C:respiratory chain complex I"/>
    <property type="evidence" value="ECO:0000250"/>
    <property type="project" value="UniProtKB"/>
</dbReference>
<dbReference type="GO" id="GO:0001835">
    <property type="term" value="P:blastocyst hatching"/>
    <property type="evidence" value="ECO:0007669"/>
    <property type="project" value="Ensembl"/>
</dbReference>
<dbReference type="FunFam" id="3.40.30.10:FF:000127">
    <property type="entry name" value="NADH dehydrogenase [ubiquinone] 1 alpha subcomplex subunit 2"/>
    <property type="match status" value="1"/>
</dbReference>
<dbReference type="Gene3D" id="3.40.30.10">
    <property type="entry name" value="Glutaredoxin"/>
    <property type="match status" value="1"/>
</dbReference>
<dbReference type="InterPro" id="IPR016464">
    <property type="entry name" value="NADH_Ub_cplx-1_asu_su-2"/>
</dbReference>
<dbReference type="InterPro" id="IPR007741">
    <property type="entry name" value="Ribosomal_mL43/mS25/NADH_DH"/>
</dbReference>
<dbReference type="InterPro" id="IPR036249">
    <property type="entry name" value="Thioredoxin-like_sf"/>
</dbReference>
<dbReference type="PANTHER" id="PTHR12878:SF0">
    <property type="entry name" value="NADH DEHYDROGENASE [UBIQUINONE] 1 ALPHA SUBCOMPLEX SUBUNIT 2"/>
    <property type="match status" value="1"/>
</dbReference>
<dbReference type="PANTHER" id="PTHR12878">
    <property type="entry name" value="NADH-UBIQUINONE OXIDOREDUCTASE B8 SUBUNIT"/>
    <property type="match status" value="1"/>
</dbReference>
<dbReference type="Pfam" id="PF05047">
    <property type="entry name" value="L51_S25_CI-B8"/>
    <property type="match status" value="1"/>
</dbReference>
<dbReference type="PIRSF" id="PIRSF005822">
    <property type="entry name" value="NDUA2"/>
    <property type="match status" value="1"/>
</dbReference>
<dbReference type="SMART" id="SM00916">
    <property type="entry name" value="L51_S25_CI-B8"/>
    <property type="match status" value="1"/>
</dbReference>
<dbReference type="SUPFAM" id="SSF52833">
    <property type="entry name" value="Thioredoxin-like"/>
    <property type="match status" value="1"/>
</dbReference>
<comment type="function">
    <text evidence="2">Accessory subunit of the mitochondrial membrane respiratory chain NADH dehydrogenase (Complex I), that is believed not to be involved in catalysis. Complex I functions in the transfer of electrons from NADH to the respiratory chain. The immediate electron acceptor for the enzyme is believed to be ubiquinone.</text>
</comment>
<comment type="subunit">
    <text evidence="2">Complex I is composed of 45 different subunits.</text>
</comment>
<comment type="subcellular location">
    <subcellularLocation>
        <location evidence="2">Mitochondrion inner membrane</location>
        <topology evidence="2">Peripheral membrane protein</topology>
        <orientation evidence="2">Matrix side</orientation>
    </subcellularLocation>
</comment>
<comment type="similarity">
    <text evidence="4">Belongs to the complex I NDUFA2 subunit family.</text>
</comment>
<gene>
    <name type="primary">NDUFA2</name>
    <name type="ORF">QnpA-16235</name>
</gene>
<organism>
    <name type="scientific">Macaca fascicularis</name>
    <name type="common">Crab-eating macaque</name>
    <name type="synonym">Cynomolgus monkey</name>
    <dbReference type="NCBI Taxonomy" id="9541"/>
    <lineage>
        <taxon>Eukaryota</taxon>
        <taxon>Metazoa</taxon>
        <taxon>Chordata</taxon>
        <taxon>Craniata</taxon>
        <taxon>Vertebrata</taxon>
        <taxon>Euteleostomi</taxon>
        <taxon>Mammalia</taxon>
        <taxon>Eutheria</taxon>
        <taxon>Euarchontoglires</taxon>
        <taxon>Primates</taxon>
        <taxon>Haplorrhini</taxon>
        <taxon>Catarrhini</taxon>
        <taxon>Cercopithecidae</taxon>
        <taxon>Cercopithecinae</taxon>
        <taxon>Macaca</taxon>
    </lineage>
</organism>
<reference key="1">
    <citation type="submission" date="2005-06" db="EMBL/GenBank/DDBJ databases">
        <title>DNA sequences of macaque genes expressed in brain or testis and its evolutionary implications.</title>
        <authorList>
            <consortium name="International consortium for macaque cDNA sequencing and analysis"/>
        </authorList>
    </citation>
    <scope>NUCLEOTIDE SEQUENCE [LARGE SCALE MRNA]</scope>
    <source>
        <tissue>Parietal cortex</tissue>
    </source>
</reference>
<accession>Q4R5E2</accession>
<sequence>MAAAAASRGIGAKLGLREIRIHLCQRSPGSQGVRDFIEKRYVELKKANPDLPILIRECSDVQPKLWARYAFGQEKNVPLNNFSADQVTRALENVLSGKA</sequence>
<proteinExistence type="inferred from homology"/>
<keyword id="KW-0007">Acetylation</keyword>
<keyword id="KW-1015">Disulfide bond</keyword>
<keyword id="KW-0249">Electron transport</keyword>
<keyword id="KW-0472">Membrane</keyword>
<keyword id="KW-0496">Mitochondrion</keyword>
<keyword id="KW-0999">Mitochondrion inner membrane</keyword>
<keyword id="KW-1185">Reference proteome</keyword>
<keyword id="KW-0679">Respiratory chain</keyword>
<keyword id="KW-0813">Transport</keyword>
<protein>
    <recommendedName>
        <fullName>NADH dehydrogenase [ubiquinone] 1 alpha subcomplex subunit 2</fullName>
    </recommendedName>
    <alternativeName>
        <fullName>Complex I-B8</fullName>
        <shortName>CI-B8</shortName>
    </alternativeName>
    <alternativeName>
        <fullName>NADH-ubiquinone oxidoreductase B8 subunit</fullName>
    </alternativeName>
</protein>
<name>NDUA2_MACFA</name>
<feature type="initiator methionine" description="Removed" evidence="2">
    <location>
        <position position="1"/>
    </location>
</feature>
<feature type="chain" id="PRO_0000234300" description="NADH dehydrogenase [ubiquinone] 1 alpha subcomplex subunit 2">
    <location>
        <begin position="2"/>
        <end position="99"/>
    </location>
</feature>
<feature type="modified residue" description="N-acetylalanine" evidence="2">
    <location>
        <position position="2"/>
    </location>
</feature>
<feature type="modified residue" description="N6-acetyllysine; alternate" evidence="3">
    <location>
        <position position="64"/>
    </location>
</feature>
<feature type="modified residue" description="N6-succinyllysine; alternate" evidence="3">
    <location>
        <position position="64"/>
    </location>
</feature>
<feature type="modified residue" description="N6-acetyllysine" evidence="3">
    <location>
        <position position="75"/>
    </location>
</feature>
<feature type="disulfide bond" description="Redox-active" evidence="1">
    <location>
        <begin position="24"/>
        <end position="58"/>
    </location>
</feature>